<name>RL24_RHIE6</name>
<proteinExistence type="inferred from homology"/>
<accession>B3PWT2</accession>
<dbReference type="EMBL" id="CP001074">
    <property type="protein sequence ID" value="ACE90730.1"/>
    <property type="molecule type" value="Genomic_DNA"/>
</dbReference>
<dbReference type="SMR" id="B3PWT2"/>
<dbReference type="KEGG" id="rec:RHECIAT_CH0001760"/>
<dbReference type="eggNOG" id="COG0198">
    <property type="taxonomic scope" value="Bacteria"/>
</dbReference>
<dbReference type="HOGENOM" id="CLU_093315_2_2_5"/>
<dbReference type="Proteomes" id="UP000008817">
    <property type="component" value="Chromosome"/>
</dbReference>
<dbReference type="GO" id="GO:1990904">
    <property type="term" value="C:ribonucleoprotein complex"/>
    <property type="evidence" value="ECO:0007669"/>
    <property type="project" value="UniProtKB-KW"/>
</dbReference>
<dbReference type="GO" id="GO:0005840">
    <property type="term" value="C:ribosome"/>
    <property type="evidence" value="ECO:0007669"/>
    <property type="project" value="UniProtKB-KW"/>
</dbReference>
<dbReference type="GO" id="GO:0019843">
    <property type="term" value="F:rRNA binding"/>
    <property type="evidence" value="ECO:0007669"/>
    <property type="project" value="UniProtKB-UniRule"/>
</dbReference>
<dbReference type="GO" id="GO:0003735">
    <property type="term" value="F:structural constituent of ribosome"/>
    <property type="evidence" value="ECO:0007669"/>
    <property type="project" value="InterPro"/>
</dbReference>
<dbReference type="GO" id="GO:0006412">
    <property type="term" value="P:translation"/>
    <property type="evidence" value="ECO:0007669"/>
    <property type="project" value="UniProtKB-UniRule"/>
</dbReference>
<dbReference type="CDD" id="cd06089">
    <property type="entry name" value="KOW_RPL26"/>
    <property type="match status" value="1"/>
</dbReference>
<dbReference type="FunFam" id="2.30.30.30:FF:000004">
    <property type="entry name" value="50S ribosomal protein L24"/>
    <property type="match status" value="1"/>
</dbReference>
<dbReference type="Gene3D" id="2.30.30.30">
    <property type="match status" value="1"/>
</dbReference>
<dbReference type="HAMAP" id="MF_01326_B">
    <property type="entry name" value="Ribosomal_uL24_B"/>
    <property type="match status" value="1"/>
</dbReference>
<dbReference type="InterPro" id="IPR005824">
    <property type="entry name" value="KOW"/>
</dbReference>
<dbReference type="InterPro" id="IPR014722">
    <property type="entry name" value="Rib_uL2_dom2"/>
</dbReference>
<dbReference type="InterPro" id="IPR003256">
    <property type="entry name" value="Ribosomal_uL24"/>
</dbReference>
<dbReference type="InterPro" id="IPR041988">
    <property type="entry name" value="Ribosomal_uL24_KOW"/>
</dbReference>
<dbReference type="InterPro" id="IPR008991">
    <property type="entry name" value="Translation_prot_SH3-like_sf"/>
</dbReference>
<dbReference type="NCBIfam" id="TIGR01079">
    <property type="entry name" value="rplX_bact"/>
    <property type="match status" value="1"/>
</dbReference>
<dbReference type="PANTHER" id="PTHR12903">
    <property type="entry name" value="MITOCHONDRIAL RIBOSOMAL PROTEIN L24"/>
    <property type="match status" value="1"/>
</dbReference>
<dbReference type="Pfam" id="PF00467">
    <property type="entry name" value="KOW"/>
    <property type="match status" value="1"/>
</dbReference>
<dbReference type="Pfam" id="PF17136">
    <property type="entry name" value="ribosomal_L24"/>
    <property type="match status" value="1"/>
</dbReference>
<dbReference type="SMART" id="SM00739">
    <property type="entry name" value="KOW"/>
    <property type="match status" value="1"/>
</dbReference>
<dbReference type="SUPFAM" id="SSF50104">
    <property type="entry name" value="Translation proteins SH3-like domain"/>
    <property type="match status" value="1"/>
</dbReference>
<comment type="function">
    <text evidence="1">One of two assembly initiator proteins, it binds directly to the 5'-end of the 23S rRNA, where it nucleates assembly of the 50S subunit.</text>
</comment>
<comment type="function">
    <text evidence="1">One of the proteins that surrounds the polypeptide exit tunnel on the outside of the subunit.</text>
</comment>
<comment type="subunit">
    <text evidence="1">Part of the 50S ribosomal subunit.</text>
</comment>
<comment type="similarity">
    <text evidence="1">Belongs to the universal ribosomal protein uL24 family.</text>
</comment>
<organism>
    <name type="scientific">Rhizobium etli (strain CIAT 652)</name>
    <dbReference type="NCBI Taxonomy" id="491916"/>
    <lineage>
        <taxon>Bacteria</taxon>
        <taxon>Pseudomonadati</taxon>
        <taxon>Pseudomonadota</taxon>
        <taxon>Alphaproteobacteria</taxon>
        <taxon>Hyphomicrobiales</taxon>
        <taxon>Rhizobiaceae</taxon>
        <taxon>Rhizobium/Agrobacterium group</taxon>
        <taxon>Rhizobium</taxon>
    </lineage>
</organism>
<gene>
    <name evidence="1" type="primary">rplX</name>
    <name type="ordered locus">RHECIAT_CH0001760</name>
</gene>
<keyword id="KW-0687">Ribonucleoprotein</keyword>
<keyword id="KW-0689">Ribosomal protein</keyword>
<keyword id="KW-0694">RNA-binding</keyword>
<keyword id="KW-0699">rRNA-binding</keyword>
<feature type="chain" id="PRO_1000142027" description="Large ribosomal subunit protein uL24">
    <location>
        <begin position="1"/>
        <end position="102"/>
    </location>
</feature>
<evidence type="ECO:0000255" key="1">
    <source>
        <dbReference type="HAMAP-Rule" id="MF_01326"/>
    </source>
</evidence>
<evidence type="ECO:0000305" key="2"/>
<protein>
    <recommendedName>
        <fullName evidence="1">Large ribosomal subunit protein uL24</fullName>
    </recommendedName>
    <alternativeName>
        <fullName evidence="2">50S ribosomal protein L24</fullName>
    </alternativeName>
</protein>
<reference key="1">
    <citation type="journal article" date="2010" name="Appl. Environ. Microbiol.">
        <title>Conserved symbiotic plasmid DNA sequences in the multireplicon pangenomic structure of Rhizobium etli.</title>
        <authorList>
            <person name="Gonzalez V."/>
            <person name="Acosta J.L."/>
            <person name="Santamaria R.I."/>
            <person name="Bustos P."/>
            <person name="Fernandez J.L."/>
            <person name="Hernandez Gonzalez I.L."/>
            <person name="Diaz R."/>
            <person name="Flores M."/>
            <person name="Palacios R."/>
            <person name="Mora J."/>
            <person name="Davila G."/>
        </authorList>
    </citation>
    <scope>NUCLEOTIDE SEQUENCE [LARGE SCALE GENOMIC DNA]</scope>
    <source>
        <strain>CIAT 652</strain>
    </source>
</reference>
<sequence length="102" mass="11209">MQKIRKGDKVVMLAGKDKGRTGEVVQVMPKEDRAVVRGVNVVKRHQRQTQTQEAGIINKEAPVHLSNIAIVDKDGKPTRVGFKVVDGKKVRVAKRSGEVIDG</sequence>